<protein>
    <recommendedName>
        <fullName>Calcium-activated chloride channel regulator 1</fullName>
        <ecNumber evidence="2">3.4.-.-</ecNumber>
    </recommendedName>
    <alternativeName>
        <fullName>Calcium-activated chloride channel family member 1</fullName>
    </alternativeName>
</protein>
<organism>
    <name type="scientific">Macaca mulatta</name>
    <name type="common">Rhesus macaque</name>
    <dbReference type="NCBI Taxonomy" id="9544"/>
    <lineage>
        <taxon>Eukaryota</taxon>
        <taxon>Metazoa</taxon>
        <taxon>Chordata</taxon>
        <taxon>Craniata</taxon>
        <taxon>Vertebrata</taxon>
        <taxon>Euteleostomi</taxon>
        <taxon>Mammalia</taxon>
        <taxon>Eutheria</taxon>
        <taxon>Euarchontoglires</taxon>
        <taxon>Primates</taxon>
        <taxon>Haplorrhini</taxon>
        <taxon>Catarrhini</taxon>
        <taxon>Cercopithecidae</taxon>
        <taxon>Cercopithecinae</taxon>
        <taxon>Macaca</taxon>
    </lineage>
</organism>
<reference key="1">
    <citation type="submission" date="2004-03" db="EMBL/GenBank/DDBJ databases">
        <title>Rhesus monkey calcium-activated chloride channel sequence.</title>
        <authorList>
            <person name="Tam J."/>
            <person name="Vaillancourt J.P."/>
            <person name="Xanthoudakis S."/>
        </authorList>
    </citation>
    <scope>NUCLEOTIDE SEQUENCE [MRNA]</scope>
    <source>
        <tissue>Ileum</tissue>
    </source>
</reference>
<feature type="signal peptide" evidence="3">
    <location>
        <begin position="1"/>
        <end position="21"/>
    </location>
</feature>
<feature type="chain" id="PRO_0000333691" description="Calcium-activated chloride channel regulator 1">
    <location>
        <begin position="22"/>
        <end position="913"/>
    </location>
</feature>
<feature type="domain" description="VWFA" evidence="4">
    <location>
        <begin position="306"/>
        <end position="475"/>
    </location>
</feature>
<feature type="region of interest" description="Metalloprotease domain" evidence="2">
    <location>
        <begin position="46"/>
        <end position="199"/>
    </location>
</feature>
<feature type="region of interest" description="Disordered" evidence="5">
    <location>
        <begin position="866"/>
        <end position="885"/>
    </location>
</feature>
<feature type="active site" evidence="2">
    <location>
        <position position="157"/>
    </location>
</feature>
<feature type="binding site" evidence="2">
    <location>
        <position position="156"/>
    </location>
    <ligand>
        <name>Zn(2+)</name>
        <dbReference type="ChEBI" id="CHEBI:29105"/>
        <note>catalytic</note>
    </ligand>
</feature>
<feature type="binding site" evidence="2">
    <location>
        <position position="160"/>
    </location>
    <ligand>
        <name>Zn(2+)</name>
        <dbReference type="ChEBI" id="CHEBI:29105"/>
        <note>catalytic</note>
    </ligand>
</feature>
<feature type="binding site" evidence="2">
    <location>
        <position position="167"/>
    </location>
    <ligand>
        <name>Zn(2+)</name>
        <dbReference type="ChEBI" id="CHEBI:29105"/>
        <note>catalytic</note>
    </ligand>
</feature>
<feature type="site" description="Cleavage; by autolysis" evidence="2">
    <location>
        <begin position="694"/>
        <end position="695"/>
    </location>
</feature>
<feature type="glycosylation site" description="N-linked (GlcNAc...) asparagine" evidence="3">
    <location>
        <position position="503"/>
    </location>
</feature>
<feature type="glycosylation site" description="N-linked (GlcNAc...) asparagine" evidence="3">
    <location>
        <position position="769"/>
    </location>
</feature>
<feature type="glycosylation site" description="N-linked (GlcNAc...) asparagine" evidence="3">
    <location>
        <position position="803"/>
    </location>
</feature>
<feature type="glycosylation site" description="N-linked (GlcNAc...) asparagine" evidence="3">
    <location>
        <position position="809"/>
    </location>
</feature>
<feature type="glycosylation site" description="N-linked (GlcNAc...) asparagine" evidence="3">
    <location>
        <position position="830"/>
    </location>
</feature>
<feature type="glycosylation site" description="N-linked (GlcNAc...) asparagine" evidence="3">
    <location>
        <position position="835"/>
    </location>
</feature>
<feature type="glycosylation site" description="N-linked (GlcNAc...) asparagine" evidence="3">
    <location>
        <position position="885"/>
    </location>
</feature>
<feature type="glycosylation site" description="N-linked (GlcNAc...) asparagine" evidence="3">
    <location>
        <position position="889"/>
    </location>
</feature>
<comment type="function">
    <text evidence="1">May be involved in mediating calcium-activated chloride conductance. May play critical roles in goblet cell metaplasia, mucus hypersecretion, cystic fibrosis and AHR. May be involved in the regulation of mucus production and/or secretion by goblet cells. Involved in the regulation of tissue inflammation in the innate immune response. May play a role as a tumor suppressor. Induces MUC5AC (By similarity).</text>
</comment>
<comment type="subcellular location">
    <subcellularLocation>
        <location evidence="1">Secreted</location>
        <location evidence="1">Extracellular space</location>
    </subcellularLocation>
</comment>
<comment type="domain">
    <text evidence="2">The metalloprotease region is responsible for autoproteolytic processing. It can also cross-cleave other CLCA substrates.</text>
</comment>
<comment type="PTM">
    <text evidence="1">Glycosylated.</text>
</comment>
<comment type="PTM">
    <text evidence="2">The translation product is autoproteolytically cleaved by the metalloprotease domain in the endoplasmic reticulum into a N-terminal and a C-terminal products that remain physically associated with each other. The cleavage is necessary for calcium-activated chloride channel (CaCC) activation activity.</text>
</comment>
<comment type="similarity">
    <text evidence="6">Belongs to the CLCR family.</text>
</comment>
<proteinExistence type="evidence at transcript level"/>
<sequence>MGPFKSSVFILILHLLEGALSDSLIQLNNNGYEGIVIAIDPNVPEDETLIQQIKDMVTQASPYLFEATGKRFYFKNVAILIPETWKTKADYVRPKLETYKNADVLVAESTPSGGDEPYTEHIGKCGDQGERIHLTPHFLAGKQLKEYGPQGRAFVHEWAHLRWGVFDEYNNDEKFYLSNGRIQAVRCSVGITGKIEVNKCQGGSCYTKRCTFNKATGLYEKGCEFIPHSQQTEKASIMFAQHVDSVVEFCTEQNHNKEAPNMQNTKCNLRSTWEVIRDSEDFKKTTPTTTQPPNPTFSLLQIGQRIVCLVLDKSGSMATGNRLNRLNQAGQLFLLQIIELRSWVGMVTFDSAAHVQSELIQINSGSDRDTLTKRLPTAASGGTSICSGLRLAFTVIKKKYPTDGSEIVLLTDGEDNTISGCFNEVKQSGAIIHTVALGPSAARELEELSKMTGGLQTYASDQVQNNGLIDAFGALSSGNGVVSERSIQLESKGSTLQNSQWMNGTVIVDSTVGKDTLFLVTWTTQPPQILLWDPSGQKQDGFVVDKNTKMAFLQIPGIAKVGTWKYSLQASSQTLTLTVTSRASSATLPPITVTSKMNKDTGKFPSPMIVYANIRQGASPILRASVTALIESENGKTVTLELLDNGAGADAAKDDGVYSRYFTTYDTNGRYSVKVRALGGVNAVRRRAIPQQSGVMYIPGWIENDEIQWNPPRPEIEDDVQRKQVCFSRTSSGGSFVASGVPNAPIPDLFPPCQITDLKAEIHGHSLINLTWTAPGDDYDHGTAHKYIIRISTSILDLRDKFNESLQVNTTALIPKEANSEEVFLFKPENITFENGTDLFIAIQAVDKVDLKSEISNIARVSLFIPPQTPPETPSPDETSAPCPNISINSTIPGIHILKIMWKWIGELQLSIG</sequence>
<gene>
    <name type="primary">CLCA1</name>
</gene>
<accession>Q6PT52</accession>
<keyword id="KW-0068">Autocatalytic cleavage</keyword>
<keyword id="KW-0106">Calcium</keyword>
<keyword id="KW-0109">Calcium transport</keyword>
<keyword id="KW-0868">Chloride</keyword>
<keyword id="KW-0325">Glycoprotein</keyword>
<keyword id="KW-0378">Hydrolase</keyword>
<keyword id="KW-0406">Ion transport</keyword>
<keyword id="KW-0479">Metal-binding</keyword>
<keyword id="KW-0482">Metalloprotease</keyword>
<keyword id="KW-0645">Protease</keyword>
<keyword id="KW-1185">Reference proteome</keyword>
<keyword id="KW-0964">Secreted</keyword>
<keyword id="KW-0732">Signal</keyword>
<keyword id="KW-0813">Transport</keyword>
<keyword id="KW-0862">Zinc</keyword>
<evidence type="ECO:0000250" key="1"/>
<evidence type="ECO:0000250" key="2">
    <source>
        <dbReference type="UniProtKB" id="A8K7I4"/>
    </source>
</evidence>
<evidence type="ECO:0000255" key="3"/>
<evidence type="ECO:0000255" key="4">
    <source>
        <dbReference type="PROSITE-ProRule" id="PRU00219"/>
    </source>
</evidence>
<evidence type="ECO:0000256" key="5">
    <source>
        <dbReference type="SAM" id="MobiDB-lite"/>
    </source>
</evidence>
<evidence type="ECO:0000305" key="6"/>
<name>CLCA1_MACMU</name>
<dbReference type="EC" id="3.4.-.-" evidence="2"/>
<dbReference type="EMBL" id="AY581306">
    <property type="protein sequence ID" value="AAS90562.1"/>
    <property type="molecule type" value="mRNA"/>
</dbReference>
<dbReference type="RefSeq" id="NP_001028084.1">
    <property type="nucleotide sequence ID" value="NM_001032912.1"/>
</dbReference>
<dbReference type="SMR" id="Q6PT52"/>
<dbReference type="FunCoup" id="Q6PT52">
    <property type="interactions" value="148"/>
</dbReference>
<dbReference type="STRING" id="9544.ENSMMUP00000008987"/>
<dbReference type="MEROPS" id="M87.001"/>
<dbReference type="GlyCosmos" id="Q6PT52">
    <property type="glycosylation" value="8 sites, No reported glycans"/>
</dbReference>
<dbReference type="PaxDb" id="9544-ENSMMUP00000008987"/>
<dbReference type="GeneID" id="574295"/>
<dbReference type="KEGG" id="mcc:574295"/>
<dbReference type="CTD" id="1179"/>
<dbReference type="eggNOG" id="ENOG502QRRD">
    <property type="taxonomic scope" value="Eukaryota"/>
</dbReference>
<dbReference type="InParanoid" id="Q6PT52"/>
<dbReference type="OrthoDB" id="687730at2759"/>
<dbReference type="Proteomes" id="UP000006718">
    <property type="component" value="Unassembled WGS sequence"/>
</dbReference>
<dbReference type="GO" id="GO:0005576">
    <property type="term" value="C:extracellular region"/>
    <property type="evidence" value="ECO:0007669"/>
    <property type="project" value="UniProtKB-SubCell"/>
</dbReference>
<dbReference type="GO" id="GO:0005886">
    <property type="term" value="C:plasma membrane"/>
    <property type="evidence" value="ECO:0000318"/>
    <property type="project" value="GO_Central"/>
</dbReference>
<dbReference type="GO" id="GO:0005229">
    <property type="term" value="F:intracellularly calcium-gated chloride channel activity"/>
    <property type="evidence" value="ECO:0000318"/>
    <property type="project" value="GO_Central"/>
</dbReference>
<dbReference type="GO" id="GO:0046872">
    <property type="term" value="F:metal ion binding"/>
    <property type="evidence" value="ECO:0007669"/>
    <property type="project" value="UniProtKB-KW"/>
</dbReference>
<dbReference type="GO" id="GO:0008237">
    <property type="term" value="F:metallopeptidase activity"/>
    <property type="evidence" value="ECO:0007669"/>
    <property type="project" value="UniProtKB-KW"/>
</dbReference>
<dbReference type="GO" id="GO:0006816">
    <property type="term" value="P:calcium ion transport"/>
    <property type="evidence" value="ECO:0007669"/>
    <property type="project" value="UniProtKB-KW"/>
</dbReference>
<dbReference type="GO" id="GO:0006508">
    <property type="term" value="P:proteolysis"/>
    <property type="evidence" value="ECO:0007669"/>
    <property type="project" value="UniProtKB-KW"/>
</dbReference>
<dbReference type="CDD" id="cd00198">
    <property type="entry name" value="vWFA"/>
    <property type="match status" value="1"/>
</dbReference>
<dbReference type="FunFam" id="2.60.40.10:FF:001134">
    <property type="entry name" value="Calcium-activated chloride channel regulator 1"/>
    <property type="match status" value="1"/>
</dbReference>
<dbReference type="FunFam" id="3.40.50.410:FF:000034">
    <property type="entry name" value="calcium-activated chloride channel regulator 1"/>
    <property type="match status" value="1"/>
</dbReference>
<dbReference type="Gene3D" id="3.40.50.410">
    <property type="entry name" value="von Willebrand factor, type A domain"/>
    <property type="match status" value="1"/>
</dbReference>
<dbReference type="InterPro" id="IPR004727">
    <property type="entry name" value="CLCA_chordata"/>
</dbReference>
<dbReference type="InterPro" id="IPR013642">
    <property type="entry name" value="CLCA_N"/>
</dbReference>
<dbReference type="InterPro" id="IPR051266">
    <property type="entry name" value="CLCR"/>
</dbReference>
<dbReference type="InterPro" id="IPR002035">
    <property type="entry name" value="VWF_A"/>
</dbReference>
<dbReference type="InterPro" id="IPR036465">
    <property type="entry name" value="vWFA_dom_sf"/>
</dbReference>
<dbReference type="NCBIfam" id="NF041940">
    <property type="entry name" value="choice_anch_X"/>
    <property type="match status" value="1"/>
</dbReference>
<dbReference type="NCBIfam" id="TIGR00868">
    <property type="entry name" value="hCaCC"/>
    <property type="match status" value="1"/>
</dbReference>
<dbReference type="PANTHER" id="PTHR10579">
    <property type="entry name" value="CALCIUM-ACTIVATED CHLORIDE CHANNEL REGULATOR"/>
    <property type="match status" value="1"/>
</dbReference>
<dbReference type="PANTHER" id="PTHR10579:SF52">
    <property type="entry name" value="CALCIUM-ACTIVATED CHLORIDE CHANNEL REGULATOR 1"/>
    <property type="match status" value="1"/>
</dbReference>
<dbReference type="Pfam" id="PF08434">
    <property type="entry name" value="CLCA"/>
    <property type="match status" value="1"/>
</dbReference>
<dbReference type="Pfam" id="PF13519">
    <property type="entry name" value="VWA_2"/>
    <property type="match status" value="1"/>
</dbReference>
<dbReference type="SMART" id="SM00327">
    <property type="entry name" value="VWA"/>
    <property type="match status" value="1"/>
</dbReference>
<dbReference type="SUPFAM" id="SSF53300">
    <property type="entry name" value="vWA-like"/>
    <property type="match status" value="1"/>
</dbReference>
<dbReference type="PROSITE" id="PS50234">
    <property type="entry name" value="VWFA"/>
    <property type="match status" value="1"/>
</dbReference>